<comment type="function">
    <text>May be involved in transcriptional regulation.</text>
</comment>
<comment type="subcellular location">
    <subcellularLocation>
        <location evidence="2">Nucleus</location>
    </subcellularLocation>
</comment>
<comment type="similarity">
    <text evidence="2">Belongs to the TFS-II family. TFA subfamily.</text>
</comment>
<organism>
    <name type="scientific">Mus musculus</name>
    <name type="common">Mouse</name>
    <dbReference type="NCBI Taxonomy" id="10090"/>
    <lineage>
        <taxon>Eukaryota</taxon>
        <taxon>Metazoa</taxon>
        <taxon>Chordata</taxon>
        <taxon>Craniata</taxon>
        <taxon>Vertebrata</taxon>
        <taxon>Euteleostomi</taxon>
        <taxon>Mammalia</taxon>
        <taxon>Eutheria</taxon>
        <taxon>Euarchontoglires</taxon>
        <taxon>Glires</taxon>
        <taxon>Rodentia</taxon>
        <taxon>Myomorpha</taxon>
        <taxon>Muroidea</taxon>
        <taxon>Muridae</taxon>
        <taxon>Murinae</taxon>
        <taxon>Mus</taxon>
        <taxon>Mus</taxon>
    </lineage>
</organism>
<reference key="1">
    <citation type="journal article" date="2005" name="Science">
        <title>The transcriptional landscape of the mammalian genome.</title>
        <authorList>
            <person name="Carninci P."/>
            <person name="Kasukawa T."/>
            <person name="Katayama S."/>
            <person name="Gough J."/>
            <person name="Frith M.C."/>
            <person name="Maeda N."/>
            <person name="Oyama R."/>
            <person name="Ravasi T."/>
            <person name="Lenhard B."/>
            <person name="Wells C."/>
            <person name="Kodzius R."/>
            <person name="Shimokawa K."/>
            <person name="Bajic V.B."/>
            <person name="Brenner S.E."/>
            <person name="Batalov S."/>
            <person name="Forrest A.R."/>
            <person name="Zavolan M."/>
            <person name="Davis M.J."/>
            <person name="Wilming L.G."/>
            <person name="Aidinis V."/>
            <person name="Allen J.E."/>
            <person name="Ambesi-Impiombato A."/>
            <person name="Apweiler R."/>
            <person name="Aturaliya R.N."/>
            <person name="Bailey T.L."/>
            <person name="Bansal M."/>
            <person name="Baxter L."/>
            <person name="Beisel K.W."/>
            <person name="Bersano T."/>
            <person name="Bono H."/>
            <person name="Chalk A.M."/>
            <person name="Chiu K.P."/>
            <person name="Choudhary V."/>
            <person name="Christoffels A."/>
            <person name="Clutterbuck D.R."/>
            <person name="Crowe M.L."/>
            <person name="Dalla E."/>
            <person name="Dalrymple B.P."/>
            <person name="de Bono B."/>
            <person name="Della Gatta G."/>
            <person name="di Bernardo D."/>
            <person name="Down T."/>
            <person name="Engstrom P."/>
            <person name="Fagiolini M."/>
            <person name="Faulkner G."/>
            <person name="Fletcher C.F."/>
            <person name="Fukushima T."/>
            <person name="Furuno M."/>
            <person name="Futaki S."/>
            <person name="Gariboldi M."/>
            <person name="Georgii-Hemming P."/>
            <person name="Gingeras T.R."/>
            <person name="Gojobori T."/>
            <person name="Green R.E."/>
            <person name="Gustincich S."/>
            <person name="Harbers M."/>
            <person name="Hayashi Y."/>
            <person name="Hensch T.K."/>
            <person name="Hirokawa N."/>
            <person name="Hill D."/>
            <person name="Huminiecki L."/>
            <person name="Iacono M."/>
            <person name="Ikeo K."/>
            <person name="Iwama A."/>
            <person name="Ishikawa T."/>
            <person name="Jakt M."/>
            <person name="Kanapin A."/>
            <person name="Katoh M."/>
            <person name="Kawasawa Y."/>
            <person name="Kelso J."/>
            <person name="Kitamura H."/>
            <person name="Kitano H."/>
            <person name="Kollias G."/>
            <person name="Krishnan S.P."/>
            <person name="Kruger A."/>
            <person name="Kummerfeld S.K."/>
            <person name="Kurochkin I.V."/>
            <person name="Lareau L.F."/>
            <person name="Lazarevic D."/>
            <person name="Lipovich L."/>
            <person name="Liu J."/>
            <person name="Liuni S."/>
            <person name="McWilliam S."/>
            <person name="Madan Babu M."/>
            <person name="Madera M."/>
            <person name="Marchionni L."/>
            <person name="Matsuda H."/>
            <person name="Matsuzawa S."/>
            <person name="Miki H."/>
            <person name="Mignone F."/>
            <person name="Miyake S."/>
            <person name="Morris K."/>
            <person name="Mottagui-Tabar S."/>
            <person name="Mulder N."/>
            <person name="Nakano N."/>
            <person name="Nakauchi H."/>
            <person name="Ng P."/>
            <person name="Nilsson R."/>
            <person name="Nishiguchi S."/>
            <person name="Nishikawa S."/>
            <person name="Nori F."/>
            <person name="Ohara O."/>
            <person name="Okazaki Y."/>
            <person name="Orlando V."/>
            <person name="Pang K.C."/>
            <person name="Pavan W.J."/>
            <person name="Pavesi G."/>
            <person name="Pesole G."/>
            <person name="Petrovsky N."/>
            <person name="Piazza S."/>
            <person name="Reed J."/>
            <person name="Reid J.F."/>
            <person name="Ring B.Z."/>
            <person name="Ringwald M."/>
            <person name="Rost B."/>
            <person name="Ruan Y."/>
            <person name="Salzberg S.L."/>
            <person name="Sandelin A."/>
            <person name="Schneider C."/>
            <person name="Schoenbach C."/>
            <person name="Sekiguchi K."/>
            <person name="Semple C.A."/>
            <person name="Seno S."/>
            <person name="Sessa L."/>
            <person name="Sheng Y."/>
            <person name="Shibata Y."/>
            <person name="Shimada H."/>
            <person name="Shimada K."/>
            <person name="Silva D."/>
            <person name="Sinclair B."/>
            <person name="Sperling S."/>
            <person name="Stupka E."/>
            <person name="Sugiura K."/>
            <person name="Sultana R."/>
            <person name="Takenaka Y."/>
            <person name="Taki K."/>
            <person name="Tammoja K."/>
            <person name="Tan S.L."/>
            <person name="Tang S."/>
            <person name="Taylor M.S."/>
            <person name="Tegner J."/>
            <person name="Teichmann S.A."/>
            <person name="Ueda H.R."/>
            <person name="van Nimwegen E."/>
            <person name="Verardo R."/>
            <person name="Wei C.L."/>
            <person name="Yagi K."/>
            <person name="Yamanishi H."/>
            <person name="Zabarovsky E."/>
            <person name="Zhu S."/>
            <person name="Zimmer A."/>
            <person name="Hide W."/>
            <person name="Bult C."/>
            <person name="Grimmond S.M."/>
            <person name="Teasdale R.D."/>
            <person name="Liu E.T."/>
            <person name="Brusic V."/>
            <person name="Quackenbush J."/>
            <person name="Wahlestedt C."/>
            <person name="Mattick J.S."/>
            <person name="Hume D.A."/>
            <person name="Kai C."/>
            <person name="Sasaki D."/>
            <person name="Tomaru Y."/>
            <person name="Fukuda S."/>
            <person name="Kanamori-Katayama M."/>
            <person name="Suzuki M."/>
            <person name="Aoki J."/>
            <person name="Arakawa T."/>
            <person name="Iida J."/>
            <person name="Imamura K."/>
            <person name="Itoh M."/>
            <person name="Kato T."/>
            <person name="Kawaji H."/>
            <person name="Kawagashira N."/>
            <person name="Kawashima T."/>
            <person name="Kojima M."/>
            <person name="Kondo S."/>
            <person name="Konno H."/>
            <person name="Nakano K."/>
            <person name="Ninomiya N."/>
            <person name="Nishio T."/>
            <person name="Okada M."/>
            <person name="Plessy C."/>
            <person name="Shibata K."/>
            <person name="Shiraki T."/>
            <person name="Suzuki S."/>
            <person name="Tagami M."/>
            <person name="Waki K."/>
            <person name="Watahiki A."/>
            <person name="Okamura-Oho Y."/>
            <person name="Suzuki H."/>
            <person name="Kawai J."/>
            <person name="Hayashizaki Y."/>
        </authorList>
    </citation>
    <scope>NUCLEOTIDE SEQUENCE [LARGE SCALE MRNA]</scope>
    <source>
        <strain>C57BL/6J</strain>
        <tissue>Olfactory bulb</tissue>
    </source>
</reference>
<reference key="2">
    <citation type="journal article" date="2004" name="Genome Res.">
        <title>The status, quality, and expansion of the NIH full-length cDNA project: the Mammalian Gene Collection (MGC).</title>
        <authorList>
            <consortium name="The MGC Project Team"/>
        </authorList>
    </citation>
    <scope>NUCLEOTIDE SEQUENCE [LARGE SCALE MRNA]</scope>
    <source>
        <tissue>Brain</tissue>
    </source>
</reference>
<reference key="3">
    <citation type="journal article" date="2010" name="Cell">
        <title>A tissue-specific atlas of mouse protein phosphorylation and expression.</title>
        <authorList>
            <person name="Huttlin E.L."/>
            <person name="Jedrychowski M.P."/>
            <person name="Elias J.E."/>
            <person name="Goswami T."/>
            <person name="Rad R."/>
            <person name="Beausoleil S.A."/>
            <person name="Villen J."/>
            <person name="Haas W."/>
            <person name="Sowa M.E."/>
            <person name="Gygi S.P."/>
        </authorList>
    </citation>
    <scope>IDENTIFICATION BY MASS SPECTROMETRY [LARGE SCALE ANALYSIS]</scope>
    <source>
        <tissue>Brain</tissue>
    </source>
</reference>
<proteinExistence type="evidence at protein level"/>
<accession>Q8CCT4</accession>
<accession>Q497R6</accession>
<protein>
    <recommendedName>
        <fullName>Transcription elongation factor A protein-like 5</fullName>
        <shortName>TCEA-like protein 5</shortName>
    </recommendedName>
    <alternativeName>
        <fullName>Transcription elongation factor S-II protein-like 5</fullName>
    </alternativeName>
</protein>
<keyword id="KW-0539">Nucleus</keyword>
<keyword id="KW-1185">Reference proteome</keyword>
<keyword id="KW-0804">Transcription</keyword>
<keyword id="KW-0805">Transcription regulation</keyword>
<dbReference type="EMBL" id="AK032140">
    <property type="protein sequence ID" value="BAC27722.1"/>
    <property type="molecule type" value="mRNA"/>
</dbReference>
<dbReference type="EMBL" id="BC100415">
    <property type="protein sequence ID" value="AAI00416.1"/>
    <property type="molecule type" value="mRNA"/>
</dbReference>
<dbReference type="CCDS" id="CCDS30416.1"/>
<dbReference type="RefSeq" id="NP_001352046.1">
    <property type="nucleotide sequence ID" value="NM_001365117.1"/>
</dbReference>
<dbReference type="RefSeq" id="NP_001352047.1">
    <property type="nucleotide sequence ID" value="NM_001365118.1"/>
</dbReference>
<dbReference type="RefSeq" id="NP_808587.1">
    <property type="nucleotide sequence ID" value="NM_177919.3"/>
</dbReference>
<dbReference type="RefSeq" id="XP_006528639.1">
    <property type="nucleotide sequence ID" value="XM_006528576.1"/>
</dbReference>
<dbReference type="BioGRID" id="237112">
    <property type="interactions" value="3"/>
</dbReference>
<dbReference type="FunCoup" id="Q8CCT4">
    <property type="interactions" value="6"/>
</dbReference>
<dbReference type="STRING" id="10090.ENSMUSP00000065397"/>
<dbReference type="GlyGen" id="Q8CCT4">
    <property type="glycosylation" value="1 site, 1 O-linked glycan (1 site)"/>
</dbReference>
<dbReference type="iPTMnet" id="Q8CCT4"/>
<dbReference type="PhosphoSitePlus" id="Q8CCT4"/>
<dbReference type="SwissPalm" id="Q8CCT4"/>
<dbReference type="PaxDb" id="10090-ENSMUSP00000065397"/>
<dbReference type="ProteomicsDB" id="262961"/>
<dbReference type="DNASU" id="331532"/>
<dbReference type="Ensembl" id="ENSMUST00000066819.11">
    <property type="protein sequence ID" value="ENSMUSP00000065397.5"/>
    <property type="gene ID" value="ENSMUSG00000054034.11"/>
</dbReference>
<dbReference type="GeneID" id="331532"/>
<dbReference type="KEGG" id="mmu:331532"/>
<dbReference type="UCSC" id="uc009uif.1">
    <property type="organism name" value="mouse"/>
</dbReference>
<dbReference type="AGR" id="MGI:3036236"/>
<dbReference type="CTD" id="340543"/>
<dbReference type="MGI" id="MGI:3036236">
    <property type="gene designation" value="Tceal5"/>
</dbReference>
<dbReference type="VEuPathDB" id="HostDB:ENSMUSG00000054034"/>
<dbReference type="eggNOG" id="ENOG502RKY0">
    <property type="taxonomic scope" value="Eukaryota"/>
</dbReference>
<dbReference type="GeneTree" id="ENSGT00950000183164"/>
<dbReference type="HOGENOM" id="CLU_078412_1_0_1"/>
<dbReference type="InParanoid" id="Q8CCT4"/>
<dbReference type="OMA" id="DKEYPND"/>
<dbReference type="OrthoDB" id="9837766at2759"/>
<dbReference type="PhylomeDB" id="Q8CCT4"/>
<dbReference type="TreeFam" id="TF336871"/>
<dbReference type="BioGRID-ORCS" id="331532">
    <property type="hits" value="1 hit in 76 CRISPR screens"/>
</dbReference>
<dbReference type="PRO" id="PR:Q8CCT4"/>
<dbReference type="Proteomes" id="UP000000589">
    <property type="component" value="Chromosome X"/>
</dbReference>
<dbReference type="RNAct" id="Q8CCT4">
    <property type="molecule type" value="protein"/>
</dbReference>
<dbReference type="Bgee" id="ENSMUSG00000054034">
    <property type="expression patterns" value="Expressed in olfactory bulb and 58 other cell types or tissues"/>
</dbReference>
<dbReference type="ExpressionAtlas" id="Q8CCT4">
    <property type="expression patterns" value="baseline and differential"/>
</dbReference>
<dbReference type="GO" id="GO:0005634">
    <property type="term" value="C:nucleus"/>
    <property type="evidence" value="ECO:0007669"/>
    <property type="project" value="UniProtKB-SubCell"/>
</dbReference>
<dbReference type="InterPro" id="IPR021156">
    <property type="entry name" value="TF_A-like/BEX"/>
</dbReference>
<dbReference type="Pfam" id="PF04538">
    <property type="entry name" value="BEX"/>
    <property type="match status" value="1"/>
</dbReference>
<evidence type="ECO:0000256" key="1">
    <source>
        <dbReference type="SAM" id="MobiDB-lite"/>
    </source>
</evidence>
<evidence type="ECO:0000305" key="2"/>
<gene>
    <name type="primary">Tceal5</name>
</gene>
<sequence length="200" mass="22038">MEKFYKENEGKPENKGRAEDEGSTEEGGKADEDKSDAEGKPARQGKLEVEGGPGEQAQQKGEGKPEKQGKSDGEGKRQGESKPDSQAKSASEARAAEKRPAEDYVPRKAKRKTDRGTDDSPKNSQEDLQDRHVSSEEMMRECADMTRAQEELRKRQKMGGFHWVPRDAQDALVPRGQRGVRGVRGGGGRGQKDLEDAPFV</sequence>
<feature type="chain" id="PRO_0000239212" description="Transcription elongation factor A protein-like 5">
    <location>
        <begin position="1"/>
        <end position="200"/>
    </location>
</feature>
<feature type="region of interest" description="Disordered" evidence="1">
    <location>
        <begin position="1"/>
        <end position="200"/>
    </location>
</feature>
<feature type="compositionally biased region" description="Basic and acidic residues" evidence="1">
    <location>
        <begin position="1"/>
        <end position="49"/>
    </location>
</feature>
<feature type="compositionally biased region" description="Basic and acidic residues" evidence="1">
    <location>
        <begin position="61"/>
        <end position="85"/>
    </location>
</feature>
<feature type="compositionally biased region" description="Basic and acidic residues" evidence="1">
    <location>
        <begin position="94"/>
        <end position="106"/>
    </location>
</feature>
<feature type="compositionally biased region" description="Basic and acidic residues" evidence="1">
    <location>
        <begin position="114"/>
        <end position="153"/>
    </location>
</feature>
<feature type="compositionally biased region" description="Basic and acidic residues" evidence="1">
    <location>
        <begin position="190"/>
        <end position="200"/>
    </location>
</feature>
<feature type="sequence conflict" description="In Ref. 2; AAI00416." evidence="2" ref="2">
    <original>G</original>
    <variation>A</variation>
    <location>
        <position position="75"/>
    </location>
</feature>
<name>TCAL5_MOUSE</name>